<feature type="chain" id="PRO_1000079005" description="Chorismate synthase">
    <location>
        <begin position="1"/>
        <end position="358"/>
    </location>
</feature>
<feature type="binding site" evidence="1">
    <location>
        <position position="48"/>
    </location>
    <ligand>
        <name>NADP(+)</name>
        <dbReference type="ChEBI" id="CHEBI:58349"/>
    </ligand>
</feature>
<feature type="binding site" evidence="1">
    <location>
        <position position="54"/>
    </location>
    <ligand>
        <name>NADP(+)</name>
        <dbReference type="ChEBI" id="CHEBI:58349"/>
    </ligand>
</feature>
<feature type="binding site" evidence="1">
    <location>
        <begin position="125"/>
        <end position="127"/>
    </location>
    <ligand>
        <name>FMN</name>
        <dbReference type="ChEBI" id="CHEBI:58210"/>
    </ligand>
</feature>
<feature type="binding site" evidence="1">
    <location>
        <position position="282"/>
    </location>
    <ligand>
        <name>FMN</name>
        <dbReference type="ChEBI" id="CHEBI:58210"/>
    </ligand>
</feature>
<feature type="binding site" evidence="1">
    <location>
        <begin position="297"/>
        <end position="301"/>
    </location>
    <ligand>
        <name>FMN</name>
        <dbReference type="ChEBI" id="CHEBI:58210"/>
    </ligand>
</feature>
<feature type="binding site" evidence="1">
    <location>
        <position position="323"/>
    </location>
    <ligand>
        <name>FMN</name>
        <dbReference type="ChEBI" id="CHEBI:58210"/>
    </ligand>
</feature>
<reference key="1">
    <citation type="submission" date="2007-08" db="EMBL/GenBank/DDBJ databases">
        <title>Complete sequence of Roseiflexus castenholzii DSM 13941.</title>
        <authorList>
            <consortium name="US DOE Joint Genome Institute"/>
            <person name="Copeland A."/>
            <person name="Lucas S."/>
            <person name="Lapidus A."/>
            <person name="Barry K."/>
            <person name="Glavina del Rio T."/>
            <person name="Dalin E."/>
            <person name="Tice H."/>
            <person name="Pitluck S."/>
            <person name="Thompson L.S."/>
            <person name="Brettin T."/>
            <person name="Bruce D."/>
            <person name="Detter J.C."/>
            <person name="Han C."/>
            <person name="Tapia R."/>
            <person name="Schmutz J."/>
            <person name="Larimer F."/>
            <person name="Land M."/>
            <person name="Hauser L."/>
            <person name="Kyrpides N."/>
            <person name="Mikhailova N."/>
            <person name="Bryant D.A."/>
            <person name="Hanada S."/>
            <person name="Tsukatani Y."/>
            <person name="Richardson P."/>
        </authorList>
    </citation>
    <scope>NUCLEOTIDE SEQUENCE [LARGE SCALE GENOMIC DNA]</scope>
    <source>
        <strain>DSM 13941 / HLO8</strain>
    </source>
</reference>
<proteinExistence type="inferred from homology"/>
<gene>
    <name evidence="1" type="primary">aroC</name>
    <name type="ordered locus">Rcas_3830</name>
</gene>
<accession>A7NQM2</accession>
<protein>
    <recommendedName>
        <fullName evidence="1">Chorismate synthase</fullName>
        <shortName evidence="1">CS</shortName>
        <ecNumber evidence="1">4.2.3.5</ecNumber>
    </recommendedName>
    <alternativeName>
        <fullName evidence="1">5-enolpyruvylshikimate-3-phosphate phospholyase</fullName>
    </alternativeName>
</protein>
<sequence>MPGNTFGQVFRLTTWGESHGPAVGCVVDGCPAGLDISEDYIQHELNRRRVGQSRVTSARQESDQVQILSGVFEGRATGAPISMLVFNTDAKPGHYENIKDLYRPGHADYTWDVKYGFRDWRGGGRSSARETIGRVAGGAVAKRLLAQHGVSIIAWTAQLGDLKAEVIDESEIERNIMRCPDARVAALMVERVEQARRSLDSLGGIVEVRARGVPPGLGEPVFDKLQADIGKAMFSIPAIKGVEFGEGFGVAHMTGSVHNDPFERRADGTIGTSSNHHGGILGGISTGEEIVLRIAAKPPASIARLQRTVDREGNPTEIEIHGRHDPTVLPRLVPIAEAMLALVLADHLLRQRLARMER</sequence>
<organism>
    <name type="scientific">Roseiflexus castenholzii (strain DSM 13941 / HLO8)</name>
    <dbReference type="NCBI Taxonomy" id="383372"/>
    <lineage>
        <taxon>Bacteria</taxon>
        <taxon>Bacillati</taxon>
        <taxon>Chloroflexota</taxon>
        <taxon>Chloroflexia</taxon>
        <taxon>Chloroflexales</taxon>
        <taxon>Roseiflexineae</taxon>
        <taxon>Roseiflexaceae</taxon>
        <taxon>Roseiflexus</taxon>
    </lineage>
</organism>
<dbReference type="EC" id="4.2.3.5" evidence="1"/>
<dbReference type="EMBL" id="CP000804">
    <property type="protein sequence ID" value="ABU59868.1"/>
    <property type="molecule type" value="Genomic_DNA"/>
</dbReference>
<dbReference type="RefSeq" id="WP_012122291.1">
    <property type="nucleotide sequence ID" value="NC_009767.1"/>
</dbReference>
<dbReference type="SMR" id="A7NQM2"/>
<dbReference type="STRING" id="383372.Rcas_3830"/>
<dbReference type="KEGG" id="rca:Rcas_3830"/>
<dbReference type="eggNOG" id="COG0082">
    <property type="taxonomic scope" value="Bacteria"/>
</dbReference>
<dbReference type="HOGENOM" id="CLU_034547_0_2_0"/>
<dbReference type="OrthoDB" id="9771806at2"/>
<dbReference type="UniPathway" id="UPA00053">
    <property type="reaction ID" value="UER00090"/>
</dbReference>
<dbReference type="Proteomes" id="UP000000263">
    <property type="component" value="Chromosome"/>
</dbReference>
<dbReference type="GO" id="GO:0005829">
    <property type="term" value="C:cytosol"/>
    <property type="evidence" value="ECO:0007669"/>
    <property type="project" value="TreeGrafter"/>
</dbReference>
<dbReference type="GO" id="GO:0004107">
    <property type="term" value="F:chorismate synthase activity"/>
    <property type="evidence" value="ECO:0007669"/>
    <property type="project" value="UniProtKB-UniRule"/>
</dbReference>
<dbReference type="GO" id="GO:0010181">
    <property type="term" value="F:FMN binding"/>
    <property type="evidence" value="ECO:0007669"/>
    <property type="project" value="TreeGrafter"/>
</dbReference>
<dbReference type="GO" id="GO:0008652">
    <property type="term" value="P:amino acid biosynthetic process"/>
    <property type="evidence" value="ECO:0007669"/>
    <property type="project" value="UniProtKB-KW"/>
</dbReference>
<dbReference type="GO" id="GO:0009073">
    <property type="term" value="P:aromatic amino acid family biosynthetic process"/>
    <property type="evidence" value="ECO:0007669"/>
    <property type="project" value="UniProtKB-KW"/>
</dbReference>
<dbReference type="GO" id="GO:0009423">
    <property type="term" value="P:chorismate biosynthetic process"/>
    <property type="evidence" value="ECO:0007669"/>
    <property type="project" value="UniProtKB-UniRule"/>
</dbReference>
<dbReference type="CDD" id="cd07304">
    <property type="entry name" value="Chorismate_synthase"/>
    <property type="match status" value="1"/>
</dbReference>
<dbReference type="FunFam" id="3.60.150.10:FF:000002">
    <property type="entry name" value="Chorismate synthase"/>
    <property type="match status" value="1"/>
</dbReference>
<dbReference type="Gene3D" id="3.60.150.10">
    <property type="entry name" value="Chorismate synthase AroC"/>
    <property type="match status" value="1"/>
</dbReference>
<dbReference type="HAMAP" id="MF_00300">
    <property type="entry name" value="Chorismate_synth"/>
    <property type="match status" value="1"/>
</dbReference>
<dbReference type="InterPro" id="IPR000453">
    <property type="entry name" value="Chorismate_synth"/>
</dbReference>
<dbReference type="InterPro" id="IPR035904">
    <property type="entry name" value="Chorismate_synth_AroC_sf"/>
</dbReference>
<dbReference type="InterPro" id="IPR020541">
    <property type="entry name" value="Chorismate_synthase_CS"/>
</dbReference>
<dbReference type="NCBIfam" id="TIGR00033">
    <property type="entry name" value="aroC"/>
    <property type="match status" value="1"/>
</dbReference>
<dbReference type="NCBIfam" id="NF003793">
    <property type="entry name" value="PRK05382.1"/>
    <property type="match status" value="1"/>
</dbReference>
<dbReference type="PANTHER" id="PTHR21085">
    <property type="entry name" value="CHORISMATE SYNTHASE"/>
    <property type="match status" value="1"/>
</dbReference>
<dbReference type="PANTHER" id="PTHR21085:SF0">
    <property type="entry name" value="CHORISMATE SYNTHASE"/>
    <property type="match status" value="1"/>
</dbReference>
<dbReference type="Pfam" id="PF01264">
    <property type="entry name" value="Chorismate_synt"/>
    <property type="match status" value="1"/>
</dbReference>
<dbReference type="PIRSF" id="PIRSF001456">
    <property type="entry name" value="Chorismate_synth"/>
    <property type="match status" value="1"/>
</dbReference>
<dbReference type="SUPFAM" id="SSF103263">
    <property type="entry name" value="Chorismate synthase, AroC"/>
    <property type="match status" value="1"/>
</dbReference>
<dbReference type="PROSITE" id="PS00787">
    <property type="entry name" value="CHORISMATE_SYNTHASE_1"/>
    <property type="match status" value="1"/>
</dbReference>
<dbReference type="PROSITE" id="PS00788">
    <property type="entry name" value="CHORISMATE_SYNTHASE_2"/>
    <property type="match status" value="1"/>
</dbReference>
<keyword id="KW-0028">Amino-acid biosynthesis</keyword>
<keyword id="KW-0057">Aromatic amino acid biosynthesis</keyword>
<keyword id="KW-0274">FAD</keyword>
<keyword id="KW-0285">Flavoprotein</keyword>
<keyword id="KW-0288">FMN</keyword>
<keyword id="KW-0456">Lyase</keyword>
<keyword id="KW-0521">NADP</keyword>
<keyword id="KW-1185">Reference proteome</keyword>
<evidence type="ECO:0000255" key="1">
    <source>
        <dbReference type="HAMAP-Rule" id="MF_00300"/>
    </source>
</evidence>
<name>AROC_ROSCS</name>
<comment type="function">
    <text evidence="1">Catalyzes the anti-1,4-elimination of the C-3 phosphate and the C-6 proR hydrogen from 5-enolpyruvylshikimate-3-phosphate (EPSP) to yield chorismate, which is the branch point compound that serves as the starting substrate for the three terminal pathways of aromatic amino acid biosynthesis. This reaction introduces a second double bond into the aromatic ring system.</text>
</comment>
<comment type="catalytic activity">
    <reaction evidence="1">
        <text>5-O-(1-carboxyvinyl)-3-phosphoshikimate = chorismate + phosphate</text>
        <dbReference type="Rhea" id="RHEA:21020"/>
        <dbReference type="ChEBI" id="CHEBI:29748"/>
        <dbReference type="ChEBI" id="CHEBI:43474"/>
        <dbReference type="ChEBI" id="CHEBI:57701"/>
        <dbReference type="EC" id="4.2.3.5"/>
    </reaction>
</comment>
<comment type="cofactor">
    <cofactor evidence="1">
        <name>FMNH2</name>
        <dbReference type="ChEBI" id="CHEBI:57618"/>
    </cofactor>
    <text evidence="1">Reduced FMN (FMNH(2)).</text>
</comment>
<comment type="pathway">
    <text evidence="1">Metabolic intermediate biosynthesis; chorismate biosynthesis; chorismate from D-erythrose 4-phosphate and phosphoenolpyruvate: step 7/7.</text>
</comment>
<comment type="subunit">
    <text evidence="1">Homotetramer.</text>
</comment>
<comment type="similarity">
    <text evidence="1">Belongs to the chorismate synthase family.</text>
</comment>